<name>DRAM2_BOVIN</name>
<accession>Q3ZC48</accession>
<feature type="chain" id="PRO_0000254101" description="DNA damage-regulated autophagy modulator protein 2">
    <location>
        <begin position="1"/>
        <end position="266"/>
    </location>
</feature>
<feature type="transmembrane region" description="Helical" evidence="3">
    <location>
        <begin position="8"/>
        <end position="28"/>
    </location>
</feature>
<feature type="transmembrane region" description="Helical" evidence="3">
    <location>
        <begin position="53"/>
        <end position="73"/>
    </location>
</feature>
<feature type="transmembrane region" description="Helical" evidence="3">
    <location>
        <begin position="92"/>
        <end position="112"/>
    </location>
</feature>
<feature type="transmembrane region" description="Helical" evidence="3">
    <location>
        <begin position="117"/>
        <end position="137"/>
    </location>
</feature>
<feature type="transmembrane region" description="Helical" evidence="3">
    <location>
        <begin position="160"/>
        <end position="180"/>
    </location>
</feature>
<feature type="transmembrane region" description="Helical" evidence="3">
    <location>
        <begin position="207"/>
        <end position="227"/>
    </location>
</feature>
<evidence type="ECO:0000250" key="1">
    <source>
        <dbReference type="UniProtKB" id="Q6UX65"/>
    </source>
</evidence>
<evidence type="ECO:0000250" key="2">
    <source>
        <dbReference type="UniProtKB" id="Q9CR48"/>
    </source>
</evidence>
<evidence type="ECO:0000255" key="3"/>
<evidence type="ECO:0000305" key="4"/>
<dbReference type="EMBL" id="BC102918">
    <property type="protein sequence ID" value="AAI02919.1"/>
    <property type="molecule type" value="mRNA"/>
</dbReference>
<dbReference type="RefSeq" id="NP_001070464.1">
    <property type="nucleotide sequence ID" value="NM_001076996.2"/>
</dbReference>
<dbReference type="RefSeq" id="XP_010801534.1">
    <property type="nucleotide sequence ID" value="XM_010803232.4"/>
</dbReference>
<dbReference type="RefSeq" id="XP_015319466.1">
    <property type="nucleotide sequence ID" value="XM_015463980.1"/>
</dbReference>
<dbReference type="RefSeq" id="XP_024845519.1">
    <property type="nucleotide sequence ID" value="XM_024989751.2"/>
</dbReference>
<dbReference type="RefSeq" id="XP_024845520.1">
    <property type="nucleotide sequence ID" value="XM_024989752.2"/>
</dbReference>
<dbReference type="SMR" id="Q3ZC48"/>
<dbReference type="FunCoup" id="Q3ZC48">
    <property type="interactions" value="2367"/>
</dbReference>
<dbReference type="STRING" id="9913.ENSBTAP00000071255"/>
<dbReference type="PaxDb" id="9913-ENSBTAP00000013037"/>
<dbReference type="Ensembl" id="ENSBTAT00000013037.4">
    <property type="protein sequence ID" value="ENSBTAP00000013037.3"/>
    <property type="gene ID" value="ENSBTAG00000009888.7"/>
</dbReference>
<dbReference type="GeneID" id="767922"/>
<dbReference type="KEGG" id="bta:767922"/>
<dbReference type="CTD" id="128338"/>
<dbReference type="VEuPathDB" id="HostDB:ENSBTAG00000009888"/>
<dbReference type="VGNC" id="VGNC:28202">
    <property type="gene designation" value="DRAM2"/>
</dbReference>
<dbReference type="eggNOG" id="KOG4320">
    <property type="taxonomic scope" value="Eukaryota"/>
</dbReference>
<dbReference type="GeneTree" id="ENSGT01030000234578"/>
<dbReference type="HOGENOM" id="CLU_059992_2_2_1"/>
<dbReference type="InParanoid" id="Q3ZC48"/>
<dbReference type="OMA" id="SEWCLAF"/>
<dbReference type="OrthoDB" id="191706at2759"/>
<dbReference type="TreeFam" id="TF314508"/>
<dbReference type="Proteomes" id="UP000009136">
    <property type="component" value="Chromosome 3"/>
</dbReference>
<dbReference type="Bgee" id="ENSBTAG00000009888">
    <property type="expression patterns" value="Expressed in conceptus and 109 other cell types or tissues"/>
</dbReference>
<dbReference type="GO" id="GO:0016324">
    <property type="term" value="C:apical plasma membrane"/>
    <property type="evidence" value="ECO:0000250"/>
    <property type="project" value="UniProtKB"/>
</dbReference>
<dbReference type="GO" id="GO:0005765">
    <property type="term" value="C:lysosomal membrane"/>
    <property type="evidence" value="ECO:0007669"/>
    <property type="project" value="UniProtKB-SubCell"/>
</dbReference>
<dbReference type="GO" id="GO:0005764">
    <property type="term" value="C:lysosome"/>
    <property type="evidence" value="ECO:0000250"/>
    <property type="project" value="UniProtKB"/>
</dbReference>
<dbReference type="GO" id="GO:0001917">
    <property type="term" value="C:photoreceptor inner segment"/>
    <property type="evidence" value="ECO:0000250"/>
    <property type="project" value="UniProtKB"/>
</dbReference>
<dbReference type="GO" id="GO:0006915">
    <property type="term" value="P:apoptotic process"/>
    <property type="evidence" value="ECO:0007669"/>
    <property type="project" value="UniProtKB-KW"/>
</dbReference>
<dbReference type="GO" id="GO:0006914">
    <property type="term" value="P:autophagy"/>
    <property type="evidence" value="ECO:0007669"/>
    <property type="project" value="UniProtKB-KW"/>
</dbReference>
<dbReference type="GO" id="GO:0045494">
    <property type="term" value="P:photoreceptor cell maintenance"/>
    <property type="evidence" value="ECO:0000250"/>
    <property type="project" value="UniProtKB"/>
</dbReference>
<dbReference type="GO" id="GO:0010506">
    <property type="term" value="P:regulation of autophagy"/>
    <property type="evidence" value="ECO:0000318"/>
    <property type="project" value="GO_Central"/>
</dbReference>
<dbReference type="GO" id="GO:0007601">
    <property type="term" value="P:visual perception"/>
    <property type="evidence" value="ECO:0000250"/>
    <property type="project" value="UniProtKB"/>
</dbReference>
<dbReference type="InterPro" id="IPR050911">
    <property type="entry name" value="DRAM/TMEM150_Autophagy_Mod"/>
</dbReference>
<dbReference type="InterPro" id="IPR019402">
    <property type="entry name" value="Frag1/DRAM/Sfk1"/>
</dbReference>
<dbReference type="PANTHER" id="PTHR21324:SF10">
    <property type="entry name" value="DNA DAMAGE-REGULATED AUTOPHAGY MODULATOR PROTEIN 2"/>
    <property type="match status" value="1"/>
</dbReference>
<dbReference type="PANTHER" id="PTHR21324">
    <property type="entry name" value="FASTING-INDUCIBLE INTEGRAL MEMBRANE PROTEIN TM6P1-RELATED"/>
    <property type="match status" value="1"/>
</dbReference>
<dbReference type="Pfam" id="PF10277">
    <property type="entry name" value="Frag1"/>
    <property type="match status" value="1"/>
</dbReference>
<organism>
    <name type="scientific">Bos taurus</name>
    <name type="common">Bovine</name>
    <dbReference type="NCBI Taxonomy" id="9913"/>
    <lineage>
        <taxon>Eukaryota</taxon>
        <taxon>Metazoa</taxon>
        <taxon>Chordata</taxon>
        <taxon>Craniata</taxon>
        <taxon>Vertebrata</taxon>
        <taxon>Euteleostomi</taxon>
        <taxon>Mammalia</taxon>
        <taxon>Eutheria</taxon>
        <taxon>Laurasiatheria</taxon>
        <taxon>Artiodactyla</taxon>
        <taxon>Ruminantia</taxon>
        <taxon>Pecora</taxon>
        <taxon>Bovidae</taxon>
        <taxon>Bovinae</taxon>
        <taxon>Bos</taxon>
    </lineage>
</organism>
<sequence>MWWFQQGLSFLPSALVIWTAAAFIFSYITAITLHHVDPVLPYISDTGTVAPEKCLFGAMLNIAAVLCVATIYVRYKQVHALNPEENRIIRLNKAGLVLGLLSCLGLSLVANFQKTTFFAVHVCGAVLTFGMGSLYMFVQTILSYQMQPKIHGKQVFWIRLLLVIWCGVSAFSMLTCSSLLYNGSFGADIVQKLHWNPEDKGYVLHMITTAAEWSMSLSFFGFFLTYIRDFQKISLRVEATLHGLTLYDTAPCPVNNERTWLLSRDV</sequence>
<protein>
    <recommendedName>
        <fullName>DNA damage-regulated autophagy modulator protein 2</fullName>
    </recommendedName>
    <alternativeName>
        <fullName>Transmembrane protein 77</fullName>
    </alternativeName>
</protein>
<reference key="1">
    <citation type="submission" date="2005-08" db="EMBL/GenBank/DDBJ databases">
        <authorList>
            <consortium name="NIH - Mammalian Gene Collection (MGC) project"/>
        </authorList>
    </citation>
    <scope>NUCLEOTIDE SEQUENCE [LARGE SCALE MRNA]</scope>
    <source>
        <strain>Hereford</strain>
        <tissue>Heart ventricle</tissue>
    </source>
</reference>
<proteinExistence type="evidence at transcript level"/>
<comment type="function">
    <text evidence="1">Plays a role in the initiation of autophagy. In the retina, might be involved in the process of photoreceptor cells renewal and recycling to preserve visual function. Induces apoptotic cell death when coexpressed with DRAM1.</text>
</comment>
<comment type="subcellular location">
    <subcellularLocation>
        <location evidence="1">Lysosome membrane</location>
        <topology evidence="1">Multi-pass membrane protein</topology>
    </subcellularLocation>
    <subcellularLocation>
        <location evidence="2">Photoreceptor inner segment</location>
    </subcellularLocation>
    <subcellularLocation>
        <location evidence="2">Apical cell membrane</location>
    </subcellularLocation>
    <text evidence="2">Localized to photoreceptor inner segments and to the apical surface of retinal pigment epithelial cells.</text>
</comment>
<comment type="similarity">
    <text evidence="4">Belongs to the DRAM/TMEM150 family.</text>
</comment>
<gene>
    <name type="primary">DRAM2</name>
    <name type="synonym">TMEM77</name>
</gene>
<keyword id="KW-0053">Apoptosis</keyword>
<keyword id="KW-0072">Autophagy</keyword>
<keyword id="KW-1003">Cell membrane</keyword>
<keyword id="KW-0458">Lysosome</keyword>
<keyword id="KW-0472">Membrane</keyword>
<keyword id="KW-1185">Reference proteome</keyword>
<keyword id="KW-0812">Transmembrane</keyword>
<keyword id="KW-1133">Transmembrane helix</keyword>